<organism>
    <name type="scientific">Escherichia coli (strain K12 / MC4100 / BW2952)</name>
    <dbReference type="NCBI Taxonomy" id="595496"/>
    <lineage>
        <taxon>Bacteria</taxon>
        <taxon>Pseudomonadati</taxon>
        <taxon>Pseudomonadota</taxon>
        <taxon>Gammaproteobacteria</taxon>
        <taxon>Enterobacterales</taxon>
        <taxon>Enterobacteriaceae</taxon>
        <taxon>Escherichia</taxon>
    </lineage>
</organism>
<keyword id="KW-0456">Lyase</keyword>
<keyword id="KW-0659">Purine metabolism</keyword>
<feature type="chain" id="PRO_1000212280" description="Ureidoglycolate lyase">
    <location>
        <begin position="1"/>
        <end position="160"/>
    </location>
</feature>
<accession>C4ZUV5</accession>
<sequence>MKLQVLPLSQEAFSAYGDVIETQQRDFFHINNGLVERYHDLALVEILEQDCTLISINRAQPANLPLTIHELERHPLGTQAFIPMKGEVFVVVVALGDDKPDLSTLRAFITNGEQGVNYHRNVWHHPLFAWQRVTDFLTIDRGGSDNCDVESIPEQELCFA</sequence>
<reference key="1">
    <citation type="journal article" date="2009" name="J. Bacteriol.">
        <title>Genomic sequencing reveals regulatory mutations and recombinational events in the widely used MC4100 lineage of Escherichia coli K-12.</title>
        <authorList>
            <person name="Ferenci T."/>
            <person name="Zhou Z."/>
            <person name="Betteridge T."/>
            <person name="Ren Y."/>
            <person name="Liu Y."/>
            <person name="Feng L."/>
            <person name="Reeves P.R."/>
            <person name="Wang L."/>
        </authorList>
    </citation>
    <scope>NUCLEOTIDE SEQUENCE [LARGE SCALE GENOMIC DNA]</scope>
    <source>
        <strain>K12 / MC4100 / BW2952</strain>
    </source>
</reference>
<protein>
    <recommendedName>
        <fullName evidence="1">Ureidoglycolate lyase</fullName>
        <ecNumber evidence="1">4.3.2.3</ecNumber>
    </recommendedName>
    <alternativeName>
        <fullName evidence="1">Ureidoglycolatase</fullName>
    </alternativeName>
</protein>
<name>ALLA_ECOBW</name>
<comment type="function">
    <text evidence="1">Catalyzes the catabolism of the allantoin degradation intermediate (S)-ureidoglycolate, generating urea and glyoxylate. Involved in the anaerobic utilization of allantoin as sole nitrogen source. Reinforces the induction of genes involved in the degradation of allantoin and glyoxylate by producing glyoxylate.</text>
</comment>
<comment type="catalytic activity">
    <reaction evidence="1">
        <text>(S)-ureidoglycolate = urea + glyoxylate</text>
        <dbReference type="Rhea" id="RHEA:11304"/>
        <dbReference type="ChEBI" id="CHEBI:16199"/>
        <dbReference type="ChEBI" id="CHEBI:36655"/>
        <dbReference type="ChEBI" id="CHEBI:57296"/>
        <dbReference type="EC" id="4.3.2.3"/>
    </reaction>
</comment>
<comment type="cofactor">
    <cofactor evidence="1">
        <name>Ni(2+)</name>
        <dbReference type="ChEBI" id="CHEBI:49786"/>
    </cofactor>
</comment>
<comment type="pathway">
    <text evidence="1">Nitrogen metabolism; (S)-allantoin degradation.</text>
</comment>
<comment type="subunit">
    <text evidence="1">Homodimer.</text>
</comment>
<comment type="similarity">
    <text evidence="1">Belongs to the ureidoglycolate lyase family.</text>
</comment>
<gene>
    <name evidence="1" type="primary">allA</name>
    <name type="ordered locus">BWG_0382</name>
</gene>
<dbReference type="EC" id="4.3.2.3" evidence="1"/>
<dbReference type="EMBL" id="CP001396">
    <property type="protein sequence ID" value="ACR65767.1"/>
    <property type="molecule type" value="Genomic_DNA"/>
</dbReference>
<dbReference type="RefSeq" id="WP_000776377.1">
    <property type="nucleotide sequence ID" value="NC_012759.1"/>
</dbReference>
<dbReference type="SMR" id="C4ZUV5"/>
<dbReference type="KEGG" id="ebw:BWG_0382"/>
<dbReference type="HOGENOM" id="CLU_070848_1_1_6"/>
<dbReference type="UniPathway" id="UPA00395"/>
<dbReference type="GO" id="GO:0004848">
    <property type="term" value="F:ureidoglycolate hydrolase activity"/>
    <property type="evidence" value="ECO:0007669"/>
    <property type="project" value="InterPro"/>
</dbReference>
<dbReference type="GO" id="GO:0050385">
    <property type="term" value="F:ureidoglycolate lyase activity"/>
    <property type="evidence" value="ECO:0007669"/>
    <property type="project" value="UniProtKB-UniRule"/>
</dbReference>
<dbReference type="GO" id="GO:0000256">
    <property type="term" value="P:allantoin catabolic process"/>
    <property type="evidence" value="ECO:0007669"/>
    <property type="project" value="UniProtKB-UniRule"/>
</dbReference>
<dbReference type="GO" id="GO:0006145">
    <property type="term" value="P:purine nucleobase catabolic process"/>
    <property type="evidence" value="ECO:0007669"/>
    <property type="project" value="UniProtKB-UniRule"/>
</dbReference>
<dbReference type="CDD" id="cd20298">
    <property type="entry name" value="cupin_UAH"/>
    <property type="match status" value="1"/>
</dbReference>
<dbReference type="FunFam" id="2.60.120.480:FF:000001">
    <property type="entry name" value="Ureidoglycolate lyase"/>
    <property type="match status" value="1"/>
</dbReference>
<dbReference type="Gene3D" id="2.60.120.480">
    <property type="entry name" value="Ureidoglycolate hydrolase"/>
    <property type="match status" value="1"/>
</dbReference>
<dbReference type="HAMAP" id="MF_00616">
    <property type="entry name" value="Ureidogly_lyase"/>
    <property type="match status" value="1"/>
</dbReference>
<dbReference type="InterPro" id="IPR011051">
    <property type="entry name" value="RmlC_Cupin_sf"/>
</dbReference>
<dbReference type="InterPro" id="IPR047233">
    <property type="entry name" value="UAH_cupin"/>
</dbReference>
<dbReference type="InterPro" id="IPR007247">
    <property type="entry name" value="Ureidogly_lyase"/>
</dbReference>
<dbReference type="InterPro" id="IPR023525">
    <property type="entry name" value="Ureidogly_lyase_bac"/>
</dbReference>
<dbReference type="InterPro" id="IPR024060">
    <property type="entry name" value="Ureidoglycolate_lyase_dom_sf"/>
</dbReference>
<dbReference type="NCBIfam" id="NF002948">
    <property type="entry name" value="PRK03606.1-1"/>
    <property type="match status" value="1"/>
</dbReference>
<dbReference type="NCBIfam" id="NF009932">
    <property type="entry name" value="PRK13395.1"/>
    <property type="match status" value="1"/>
</dbReference>
<dbReference type="PANTHER" id="PTHR21221">
    <property type="entry name" value="UREIDOGLYCOLATE HYDROLASE"/>
    <property type="match status" value="1"/>
</dbReference>
<dbReference type="PANTHER" id="PTHR21221:SF1">
    <property type="entry name" value="UREIDOGLYCOLATE LYASE"/>
    <property type="match status" value="1"/>
</dbReference>
<dbReference type="Pfam" id="PF04115">
    <property type="entry name" value="Ureidogly_lyase"/>
    <property type="match status" value="1"/>
</dbReference>
<dbReference type="PIRSF" id="PIRSF017306">
    <property type="entry name" value="Ureidogly_hydro"/>
    <property type="match status" value="1"/>
</dbReference>
<dbReference type="SUPFAM" id="SSF51182">
    <property type="entry name" value="RmlC-like cupins"/>
    <property type="match status" value="1"/>
</dbReference>
<proteinExistence type="inferred from homology"/>
<evidence type="ECO:0000255" key="1">
    <source>
        <dbReference type="HAMAP-Rule" id="MF_00616"/>
    </source>
</evidence>